<comment type="function">
    <text evidence="1">NDH shuttles electrons from NAD(P)H:plastoquinone, via FMN and iron-sulfur (Fe-S) centers, to quinones in the photosynthetic chain and possibly in a chloroplast respiratory chain. The immediate electron acceptor for the enzyme in this species is believed to be plastoquinone. Couples the redox reaction to proton translocation, and thus conserves the redox energy in a proton gradient.</text>
</comment>
<comment type="catalytic activity">
    <reaction evidence="1">
        <text>a plastoquinone + NADH + (n+1) H(+)(in) = a plastoquinol + NAD(+) + n H(+)(out)</text>
        <dbReference type="Rhea" id="RHEA:42608"/>
        <dbReference type="Rhea" id="RHEA-COMP:9561"/>
        <dbReference type="Rhea" id="RHEA-COMP:9562"/>
        <dbReference type="ChEBI" id="CHEBI:15378"/>
        <dbReference type="ChEBI" id="CHEBI:17757"/>
        <dbReference type="ChEBI" id="CHEBI:57540"/>
        <dbReference type="ChEBI" id="CHEBI:57945"/>
        <dbReference type="ChEBI" id="CHEBI:62192"/>
    </reaction>
</comment>
<comment type="catalytic activity">
    <reaction evidence="1">
        <text>a plastoquinone + NADPH + (n+1) H(+)(in) = a plastoquinol + NADP(+) + n H(+)(out)</text>
        <dbReference type="Rhea" id="RHEA:42612"/>
        <dbReference type="Rhea" id="RHEA-COMP:9561"/>
        <dbReference type="Rhea" id="RHEA-COMP:9562"/>
        <dbReference type="ChEBI" id="CHEBI:15378"/>
        <dbReference type="ChEBI" id="CHEBI:17757"/>
        <dbReference type="ChEBI" id="CHEBI:57783"/>
        <dbReference type="ChEBI" id="CHEBI:58349"/>
        <dbReference type="ChEBI" id="CHEBI:62192"/>
    </reaction>
</comment>
<comment type="cofactor">
    <cofactor evidence="1">
        <name>[4Fe-4S] cluster</name>
        <dbReference type="ChEBI" id="CHEBI:49883"/>
    </cofactor>
    <text evidence="1">Binds 1 [4Fe-4S] cluster.</text>
</comment>
<comment type="subunit">
    <text evidence="1">NDH is composed of at least 16 different subunits, 5 of which are encoded in the nucleus.</text>
</comment>
<comment type="subcellular location">
    <subcellularLocation>
        <location evidence="1">Plastid</location>
        <location evidence="1">Chloroplast thylakoid membrane</location>
        <topology evidence="1">Peripheral membrane protein</topology>
        <orientation evidence="1">Stromal side</orientation>
    </subcellularLocation>
</comment>
<comment type="similarity">
    <text evidence="1">Belongs to the complex I 20 kDa subunit family.</text>
</comment>
<comment type="sequence caution" evidence="3">
    <conflict type="erroneous initiation">
        <sequence resource="EMBL-CDS" id="ABU85157"/>
    </conflict>
</comment>
<feature type="chain" id="PRO_0000358513" description="NAD(P)H-quinone oxidoreductase subunit K, chloroplastic">
    <location>
        <begin position="1"/>
        <end position="239"/>
    </location>
</feature>
<feature type="region of interest" description="Disordered" evidence="2">
    <location>
        <begin position="217"/>
        <end position="239"/>
    </location>
</feature>
<feature type="compositionally biased region" description="Basic and acidic residues" evidence="2">
    <location>
        <begin position="225"/>
        <end position="239"/>
    </location>
</feature>
<feature type="binding site" evidence="1">
    <location>
        <position position="43"/>
    </location>
    <ligand>
        <name>[4Fe-4S] cluster</name>
        <dbReference type="ChEBI" id="CHEBI:49883"/>
    </ligand>
</feature>
<feature type="binding site" evidence="1">
    <location>
        <position position="44"/>
    </location>
    <ligand>
        <name>[4Fe-4S] cluster</name>
        <dbReference type="ChEBI" id="CHEBI:49883"/>
    </ligand>
</feature>
<feature type="binding site" evidence="1">
    <location>
        <position position="108"/>
    </location>
    <ligand>
        <name>[4Fe-4S] cluster</name>
        <dbReference type="ChEBI" id="CHEBI:49883"/>
    </ligand>
</feature>
<feature type="binding site" evidence="1">
    <location>
        <position position="139"/>
    </location>
    <ligand>
        <name>[4Fe-4S] cluster</name>
        <dbReference type="ChEBI" id="CHEBI:49883"/>
    </ligand>
</feature>
<evidence type="ECO:0000255" key="1">
    <source>
        <dbReference type="HAMAP-Rule" id="MF_01356"/>
    </source>
</evidence>
<evidence type="ECO:0000256" key="2">
    <source>
        <dbReference type="SAM" id="MobiDB-lite"/>
    </source>
</evidence>
<evidence type="ECO:0000305" key="3"/>
<gene>
    <name evidence="1" type="primary">ndhK</name>
</gene>
<organism>
    <name type="scientific">Acorus calamus var. americanus</name>
    <name type="common">American sweet flag</name>
    <name type="synonym">Acorus americanus</name>
    <dbReference type="NCBI Taxonomy" id="263995"/>
    <lineage>
        <taxon>Eukaryota</taxon>
        <taxon>Viridiplantae</taxon>
        <taxon>Streptophyta</taxon>
        <taxon>Embryophyta</taxon>
        <taxon>Tracheophyta</taxon>
        <taxon>Spermatophyta</taxon>
        <taxon>Magnoliopsida</taxon>
        <taxon>Liliopsida</taxon>
        <taxon>Acoraceae</taxon>
        <taxon>Acorus</taxon>
    </lineage>
</organism>
<dbReference type="EC" id="7.1.1.-" evidence="1"/>
<dbReference type="EMBL" id="EU016716">
    <property type="protein sequence ID" value="ABU85157.1"/>
    <property type="status" value="ALT_INIT"/>
    <property type="molecule type" value="Genomic_DNA"/>
</dbReference>
<dbReference type="EMBL" id="EU273602">
    <property type="protein sequence ID" value="ABX38748.1"/>
    <property type="molecule type" value="Genomic_DNA"/>
</dbReference>
<dbReference type="RefSeq" id="YP_001586186.1">
    <property type="nucleotide sequence ID" value="NC_010093.1"/>
</dbReference>
<dbReference type="SMR" id="A9LYA5"/>
<dbReference type="GeneID" id="5777709"/>
<dbReference type="GO" id="GO:0009535">
    <property type="term" value="C:chloroplast thylakoid membrane"/>
    <property type="evidence" value="ECO:0007669"/>
    <property type="project" value="UniProtKB-SubCell"/>
</dbReference>
<dbReference type="GO" id="GO:0045271">
    <property type="term" value="C:respiratory chain complex I"/>
    <property type="evidence" value="ECO:0007669"/>
    <property type="project" value="TreeGrafter"/>
</dbReference>
<dbReference type="GO" id="GO:0051539">
    <property type="term" value="F:4 iron, 4 sulfur cluster binding"/>
    <property type="evidence" value="ECO:0007669"/>
    <property type="project" value="UniProtKB-KW"/>
</dbReference>
<dbReference type="GO" id="GO:0005506">
    <property type="term" value="F:iron ion binding"/>
    <property type="evidence" value="ECO:0007669"/>
    <property type="project" value="UniProtKB-UniRule"/>
</dbReference>
<dbReference type="GO" id="GO:0008137">
    <property type="term" value="F:NADH dehydrogenase (ubiquinone) activity"/>
    <property type="evidence" value="ECO:0007669"/>
    <property type="project" value="InterPro"/>
</dbReference>
<dbReference type="GO" id="GO:0048038">
    <property type="term" value="F:quinone binding"/>
    <property type="evidence" value="ECO:0007669"/>
    <property type="project" value="UniProtKB-KW"/>
</dbReference>
<dbReference type="GO" id="GO:0009060">
    <property type="term" value="P:aerobic respiration"/>
    <property type="evidence" value="ECO:0007669"/>
    <property type="project" value="TreeGrafter"/>
</dbReference>
<dbReference type="GO" id="GO:0015990">
    <property type="term" value="P:electron transport coupled proton transport"/>
    <property type="evidence" value="ECO:0007669"/>
    <property type="project" value="TreeGrafter"/>
</dbReference>
<dbReference type="GO" id="GO:0019684">
    <property type="term" value="P:photosynthesis, light reaction"/>
    <property type="evidence" value="ECO:0007669"/>
    <property type="project" value="UniProtKB-UniRule"/>
</dbReference>
<dbReference type="FunFam" id="3.40.50.12280:FF:000003">
    <property type="entry name" value="NAD(P)H-quinone oxidoreductase subunit K, chloroplastic"/>
    <property type="match status" value="1"/>
</dbReference>
<dbReference type="Gene3D" id="3.40.50.12280">
    <property type="match status" value="1"/>
</dbReference>
<dbReference type="HAMAP" id="MF_01356">
    <property type="entry name" value="NDH1_NuoB"/>
    <property type="match status" value="1"/>
</dbReference>
<dbReference type="InterPro" id="IPR006137">
    <property type="entry name" value="NADH_UbQ_OxRdtase-like_20kDa"/>
</dbReference>
<dbReference type="InterPro" id="IPR006138">
    <property type="entry name" value="NADH_UQ_OxRdtase_20Kd_su"/>
</dbReference>
<dbReference type="NCBIfam" id="TIGR01957">
    <property type="entry name" value="nuoB_fam"/>
    <property type="match status" value="1"/>
</dbReference>
<dbReference type="NCBIfam" id="NF005012">
    <property type="entry name" value="PRK06411.1"/>
    <property type="match status" value="1"/>
</dbReference>
<dbReference type="PANTHER" id="PTHR11995">
    <property type="entry name" value="NADH DEHYDROGENASE"/>
    <property type="match status" value="1"/>
</dbReference>
<dbReference type="PANTHER" id="PTHR11995:SF14">
    <property type="entry name" value="NADH DEHYDROGENASE [UBIQUINONE] IRON-SULFUR PROTEIN 7, MITOCHONDRIAL"/>
    <property type="match status" value="1"/>
</dbReference>
<dbReference type="Pfam" id="PF01058">
    <property type="entry name" value="Oxidored_q6"/>
    <property type="match status" value="1"/>
</dbReference>
<dbReference type="SUPFAM" id="SSF56770">
    <property type="entry name" value="HydA/Nqo6-like"/>
    <property type="match status" value="1"/>
</dbReference>
<dbReference type="PROSITE" id="PS01150">
    <property type="entry name" value="COMPLEX1_20K"/>
    <property type="match status" value="1"/>
</dbReference>
<proteinExistence type="inferred from homology"/>
<keyword id="KW-0004">4Fe-4S</keyword>
<keyword id="KW-0150">Chloroplast</keyword>
<keyword id="KW-0408">Iron</keyword>
<keyword id="KW-0411">Iron-sulfur</keyword>
<keyword id="KW-0472">Membrane</keyword>
<keyword id="KW-0479">Metal-binding</keyword>
<keyword id="KW-0520">NAD</keyword>
<keyword id="KW-0521">NADP</keyword>
<keyword id="KW-0934">Plastid</keyword>
<keyword id="KW-0618">Plastoquinone</keyword>
<keyword id="KW-0874">Quinone</keyword>
<keyword id="KW-0793">Thylakoid</keyword>
<keyword id="KW-1278">Translocase</keyword>
<keyword id="KW-0813">Transport</keyword>
<name>NDHK_ACOCI</name>
<geneLocation type="chloroplast"/>
<sequence>MNSIEFPLLDRTTPNSVISTTLNDLSNWSRLSSLWPLLYGTSCCFIEFASLIGSRFDFDRYGLVPRSSPRQADLILTAGTVTMKMAPSLVRLYEQMPEPKYVIAMGACTITGGMFSTDSYSTVRGVDKLIPVDVYLPGCPPKPEAVIDAITKLRKKLSREISEDRMGSQRENRCFTTNHKFYVRRSTHTGNYDQGLLYQSPPTAEIPSETEPFFKYKSSVSSRELGNESGKEDVSIQNK</sequence>
<accession>A9LYA5</accession>
<accession>A9QAR4</accession>
<protein>
    <recommendedName>
        <fullName evidence="1">NAD(P)H-quinone oxidoreductase subunit K, chloroplastic</fullName>
        <ecNumber evidence="1">7.1.1.-</ecNumber>
    </recommendedName>
    <alternativeName>
        <fullName evidence="1">NAD(P)H dehydrogenase subunit K</fullName>
    </alternativeName>
    <alternativeName>
        <fullName evidence="1">NADH-plastoquinone oxidoreductase subunit K</fullName>
    </alternativeName>
</protein>
<reference key="1">
    <citation type="journal article" date="2007" name="Proc. Natl. Acad. Sci. U.S.A.">
        <title>Analysis of 81 genes from 64 plastid genomes resolves relationships in angiosperms and identifies genome-scale evolutionary patterns.</title>
        <authorList>
            <person name="Jansen R.K."/>
            <person name="Cai Z."/>
            <person name="Raubeson L.A."/>
            <person name="Daniell H."/>
            <person name="dePamphilis C.W."/>
            <person name="Leebens-Mack J."/>
            <person name="Muller K.F."/>
            <person name="Guisinger-Bellian M."/>
            <person name="Haberle R.C."/>
            <person name="Hansen A.K."/>
            <person name="Chumley T.W."/>
            <person name="Lee S.B."/>
            <person name="Peery R."/>
            <person name="McNeal J.R."/>
            <person name="Kuehl J.V."/>
            <person name="Boore J.L."/>
        </authorList>
    </citation>
    <scope>NUCLEOTIDE SEQUENCE [GENOMIC DNA]</scope>
</reference>
<reference key="2">
    <citation type="submission" date="2007-11" db="EMBL/GenBank/DDBJ databases">
        <title>The complete chloroplast genome of Acorus americanus.</title>
        <authorList>
            <person name="Peery R.M."/>
            <person name="Chumley T.W."/>
            <person name="Kuehl J.V."/>
            <person name="Boore J.L."/>
            <person name="Raubeson L.A."/>
        </authorList>
    </citation>
    <scope>NUCLEOTIDE SEQUENCE [LARGE SCALE GENOMIC DNA]</scope>
</reference>